<accession>Q92BQ6</accession>
<evidence type="ECO:0000255" key="1">
    <source>
        <dbReference type="HAMAP-Rule" id="MF_00963"/>
    </source>
</evidence>
<organism>
    <name type="scientific">Listeria innocua serovar 6a (strain ATCC BAA-680 / CLIP 11262)</name>
    <dbReference type="NCBI Taxonomy" id="272626"/>
    <lineage>
        <taxon>Bacteria</taxon>
        <taxon>Bacillati</taxon>
        <taxon>Bacillota</taxon>
        <taxon>Bacilli</taxon>
        <taxon>Bacillales</taxon>
        <taxon>Listeriaceae</taxon>
        <taxon>Listeria</taxon>
    </lineage>
</organism>
<name>SIGA_LISIN</name>
<keyword id="KW-0963">Cytoplasm</keyword>
<keyword id="KW-0238">DNA-binding</keyword>
<keyword id="KW-0731">Sigma factor</keyword>
<keyword id="KW-0804">Transcription</keyword>
<keyword id="KW-0805">Transcription regulation</keyword>
<sequence length="374" mass="42446">MSDKTQNTKPVAELNVEQVKEALIEEGKKKGILTYAKIAARLAPFTLDSDQMDEYLEHVGEAGIEVSDDADDEDPDETELVKEETESFDLTDMSVPPGVKINDPVRMYLKEIGRVDLLTADEEIALAKRIEAGDIEAKGRLAEANLRLVVSIAKRYVGRGMLFLDLIQEGNMGLMKAVEKFDFNKGFKFSTYATWWIRQAITRAIADQARTIRIPVHMVETINKLIRVQRSLLQDLGRDPSPEEIGEEMDLPTEKVREILKIAQEPVSLETPIGEEDDSHLGDFIEDQDATSPSDHAAYELLKEQLEDVLDTLTDREENVLRLRFGLDDGRTRTLEEVGRVFGVTRERIRQIEAKALRKLRHPSRSKQLKDFLE</sequence>
<reference key="1">
    <citation type="journal article" date="2001" name="Science">
        <title>Comparative genomics of Listeria species.</title>
        <authorList>
            <person name="Glaser P."/>
            <person name="Frangeul L."/>
            <person name="Buchrieser C."/>
            <person name="Rusniok C."/>
            <person name="Amend A."/>
            <person name="Baquero F."/>
            <person name="Berche P."/>
            <person name="Bloecker H."/>
            <person name="Brandt P."/>
            <person name="Chakraborty T."/>
            <person name="Charbit A."/>
            <person name="Chetouani F."/>
            <person name="Couve E."/>
            <person name="de Daruvar A."/>
            <person name="Dehoux P."/>
            <person name="Domann E."/>
            <person name="Dominguez-Bernal G."/>
            <person name="Duchaud E."/>
            <person name="Durant L."/>
            <person name="Dussurget O."/>
            <person name="Entian K.-D."/>
            <person name="Fsihi H."/>
            <person name="Garcia-del Portillo F."/>
            <person name="Garrido P."/>
            <person name="Gautier L."/>
            <person name="Goebel W."/>
            <person name="Gomez-Lopez N."/>
            <person name="Hain T."/>
            <person name="Hauf J."/>
            <person name="Jackson D."/>
            <person name="Jones L.-M."/>
            <person name="Kaerst U."/>
            <person name="Kreft J."/>
            <person name="Kuhn M."/>
            <person name="Kunst F."/>
            <person name="Kurapkat G."/>
            <person name="Madueno E."/>
            <person name="Maitournam A."/>
            <person name="Mata Vicente J."/>
            <person name="Ng E."/>
            <person name="Nedjari H."/>
            <person name="Nordsiek G."/>
            <person name="Novella S."/>
            <person name="de Pablos B."/>
            <person name="Perez-Diaz J.-C."/>
            <person name="Purcell R."/>
            <person name="Remmel B."/>
            <person name="Rose M."/>
            <person name="Schlueter T."/>
            <person name="Simoes N."/>
            <person name="Tierrez A."/>
            <person name="Vazquez-Boland J.-A."/>
            <person name="Voss H."/>
            <person name="Wehland J."/>
            <person name="Cossart P."/>
        </authorList>
    </citation>
    <scope>NUCLEOTIDE SEQUENCE [LARGE SCALE GENOMIC DNA]</scope>
    <source>
        <strain>ATCC BAA-680 / CLIP 11262</strain>
    </source>
</reference>
<protein>
    <recommendedName>
        <fullName evidence="1">RNA polymerase sigma factor SigA</fullName>
    </recommendedName>
    <alternativeName>
        <fullName>Sigma-43</fullName>
    </alternativeName>
</protein>
<comment type="function">
    <text evidence="1">Sigma factors are initiation factors that promote the attachment of RNA polymerase to specific initiation sites and are then released. This sigma factor is the primary sigma factor during exponential growth.</text>
</comment>
<comment type="subunit">
    <text evidence="1">Interacts transiently with the RNA polymerase catalytic core.</text>
</comment>
<comment type="subcellular location">
    <subcellularLocation>
        <location evidence="1">Cytoplasm</location>
    </subcellularLocation>
</comment>
<comment type="similarity">
    <text evidence="1">Belongs to the sigma-70 factor family. RpoD/SigA subfamily.</text>
</comment>
<proteinExistence type="inferred from homology"/>
<gene>
    <name evidence="1" type="primary">sigA</name>
    <name type="synonym">rpoD</name>
    <name type="ordered locus">lin1491</name>
</gene>
<dbReference type="EMBL" id="AL596168">
    <property type="protein sequence ID" value="CAC96722.1"/>
    <property type="molecule type" value="Genomic_DNA"/>
</dbReference>
<dbReference type="PIR" id="AB1619">
    <property type="entry name" value="AB1619"/>
</dbReference>
<dbReference type="RefSeq" id="WP_003730430.1">
    <property type="nucleotide sequence ID" value="NC_003212.1"/>
</dbReference>
<dbReference type="SMR" id="Q92BQ6"/>
<dbReference type="STRING" id="272626.gene:17565822"/>
<dbReference type="GeneID" id="93234872"/>
<dbReference type="KEGG" id="lin:rpoD"/>
<dbReference type="eggNOG" id="COG0568">
    <property type="taxonomic scope" value="Bacteria"/>
</dbReference>
<dbReference type="HOGENOM" id="CLU_014793_3_3_9"/>
<dbReference type="OrthoDB" id="9809557at2"/>
<dbReference type="Proteomes" id="UP000002513">
    <property type="component" value="Chromosome"/>
</dbReference>
<dbReference type="GO" id="GO:0005737">
    <property type="term" value="C:cytoplasm"/>
    <property type="evidence" value="ECO:0007669"/>
    <property type="project" value="UniProtKB-SubCell"/>
</dbReference>
<dbReference type="GO" id="GO:0003677">
    <property type="term" value="F:DNA binding"/>
    <property type="evidence" value="ECO:0007669"/>
    <property type="project" value="UniProtKB-UniRule"/>
</dbReference>
<dbReference type="GO" id="GO:0016987">
    <property type="term" value="F:sigma factor activity"/>
    <property type="evidence" value="ECO:0007669"/>
    <property type="project" value="UniProtKB-UniRule"/>
</dbReference>
<dbReference type="GO" id="GO:0006352">
    <property type="term" value="P:DNA-templated transcription initiation"/>
    <property type="evidence" value="ECO:0007669"/>
    <property type="project" value="UniProtKB-UniRule"/>
</dbReference>
<dbReference type="CDD" id="cd06171">
    <property type="entry name" value="Sigma70_r4"/>
    <property type="match status" value="1"/>
</dbReference>
<dbReference type="FunFam" id="1.10.10.10:FF:000002">
    <property type="entry name" value="RNA polymerase sigma factor SigA"/>
    <property type="match status" value="1"/>
</dbReference>
<dbReference type="FunFam" id="1.10.10.10:FF:000004">
    <property type="entry name" value="RNA polymerase sigma factor SigA"/>
    <property type="match status" value="1"/>
</dbReference>
<dbReference type="FunFam" id="1.10.601.10:FF:000001">
    <property type="entry name" value="RNA polymerase sigma factor SigA"/>
    <property type="match status" value="1"/>
</dbReference>
<dbReference type="Gene3D" id="1.10.601.10">
    <property type="entry name" value="RNA Polymerase Primary Sigma Factor"/>
    <property type="match status" value="2"/>
</dbReference>
<dbReference type="Gene3D" id="1.10.220.120">
    <property type="entry name" value="Sigma-70 factor, region 1.1"/>
    <property type="match status" value="1"/>
</dbReference>
<dbReference type="Gene3D" id="1.10.10.10">
    <property type="entry name" value="Winged helix-like DNA-binding domain superfamily/Winged helix DNA-binding domain"/>
    <property type="match status" value="2"/>
</dbReference>
<dbReference type="HAMAP" id="MF_00963">
    <property type="entry name" value="Sigma70_RpoD_SigA"/>
    <property type="match status" value="1"/>
</dbReference>
<dbReference type="InterPro" id="IPR014284">
    <property type="entry name" value="RNA_pol_sigma-70_dom"/>
</dbReference>
<dbReference type="InterPro" id="IPR000943">
    <property type="entry name" value="RNA_pol_sigma70"/>
</dbReference>
<dbReference type="InterPro" id="IPR009042">
    <property type="entry name" value="RNA_pol_sigma70_r1_2"/>
</dbReference>
<dbReference type="InterPro" id="IPR007627">
    <property type="entry name" value="RNA_pol_sigma70_r2"/>
</dbReference>
<dbReference type="InterPro" id="IPR007624">
    <property type="entry name" value="RNA_pol_sigma70_r3"/>
</dbReference>
<dbReference type="InterPro" id="IPR007630">
    <property type="entry name" value="RNA_pol_sigma70_r4"/>
</dbReference>
<dbReference type="InterPro" id="IPR007127">
    <property type="entry name" value="RNA_pol_sigma_70_r1_1"/>
</dbReference>
<dbReference type="InterPro" id="IPR042189">
    <property type="entry name" value="RNA_pol_sigma_70_r1_1_sf"/>
</dbReference>
<dbReference type="InterPro" id="IPR013325">
    <property type="entry name" value="RNA_pol_sigma_r2"/>
</dbReference>
<dbReference type="InterPro" id="IPR013324">
    <property type="entry name" value="RNA_pol_sigma_r3/r4-like"/>
</dbReference>
<dbReference type="InterPro" id="IPR012760">
    <property type="entry name" value="RNA_pol_sigma_RpoD_C"/>
</dbReference>
<dbReference type="InterPro" id="IPR050239">
    <property type="entry name" value="Sigma-70_RNA_pol_init_factors"/>
</dbReference>
<dbReference type="InterPro" id="IPR028630">
    <property type="entry name" value="Sigma70_RpoD"/>
</dbReference>
<dbReference type="InterPro" id="IPR036388">
    <property type="entry name" value="WH-like_DNA-bd_sf"/>
</dbReference>
<dbReference type="NCBIfam" id="NF006666">
    <property type="entry name" value="PRK09210.1"/>
    <property type="match status" value="1"/>
</dbReference>
<dbReference type="NCBIfam" id="TIGR02393">
    <property type="entry name" value="RpoD_Cterm"/>
    <property type="match status" value="1"/>
</dbReference>
<dbReference type="NCBIfam" id="TIGR02937">
    <property type="entry name" value="sigma70-ECF"/>
    <property type="match status" value="1"/>
</dbReference>
<dbReference type="PANTHER" id="PTHR30603">
    <property type="entry name" value="RNA POLYMERASE SIGMA FACTOR RPO"/>
    <property type="match status" value="1"/>
</dbReference>
<dbReference type="PANTHER" id="PTHR30603:SF60">
    <property type="entry name" value="RNA POLYMERASE SIGMA FACTOR RPOD"/>
    <property type="match status" value="1"/>
</dbReference>
<dbReference type="Pfam" id="PF03979">
    <property type="entry name" value="Sigma70_r1_1"/>
    <property type="match status" value="1"/>
</dbReference>
<dbReference type="Pfam" id="PF00140">
    <property type="entry name" value="Sigma70_r1_2"/>
    <property type="match status" value="1"/>
</dbReference>
<dbReference type="Pfam" id="PF04542">
    <property type="entry name" value="Sigma70_r2"/>
    <property type="match status" value="1"/>
</dbReference>
<dbReference type="Pfam" id="PF04539">
    <property type="entry name" value="Sigma70_r3"/>
    <property type="match status" value="1"/>
</dbReference>
<dbReference type="Pfam" id="PF04545">
    <property type="entry name" value="Sigma70_r4"/>
    <property type="match status" value="1"/>
</dbReference>
<dbReference type="PRINTS" id="PR00046">
    <property type="entry name" value="SIGMA70FCT"/>
</dbReference>
<dbReference type="SUPFAM" id="SSF88946">
    <property type="entry name" value="Sigma2 domain of RNA polymerase sigma factors"/>
    <property type="match status" value="1"/>
</dbReference>
<dbReference type="SUPFAM" id="SSF88659">
    <property type="entry name" value="Sigma3 and sigma4 domains of RNA polymerase sigma factors"/>
    <property type="match status" value="2"/>
</dbReference>
<dbReference type="PROSITE" id="PS00715">
    <property type="entry name" value="SIGMA70_1"/>
    <property type="match status" value="1"/>
</dbReference>
<dbReference type="PROSITE" id="PS00716">
    <property type="entry name" value="SIGMA70_2"/>
    <property type="match status" value="1"/>
</dbReference>
<feature type="chain" id="PRO_0000093896" description="RNA polymerase sigma factor SigA">
    <location>
        <begin position="1"/>
        <end position="374"/>
    </location>
</feature>
<feature type="DNA-binding region" description="H-T-H motif" evidence="1">
    <location>
        <begin position="335"/>
        <end position="354"/>
    </location>
</feature>
<feature type="region of interest" description="Sigma-70 factor domain-2" evidence="1">
    <location>
        <begin position="141"/>
        <end position="211"/>
    </location>
</feature>
<feature type="region of interest" description="Sigma-70 factor domain-3" evidence="1">
    <location>
        <begin position="220"/>
        <end position="296"/>
    </location>
</feature>
<feature type="region of interest" description="Sigma-70 factor domain-4" evidence="1">
    <location>
        <begin position="309"/>
        <end position="362"/>
    </location>
</feature>
<feature type="short sequence motif" description="Interaction with polymerase core subunit RpoC">
    <location>
        <begin position="165"/>
        <end position="168"/>
    </location>
</feature>